<keyword id="KW-0472">Membrane</keyword>
<keyword id="KW-0496">Mitochondrion</keyword>
<keyword id="KW-0999">Mitochondrion inner membrane</keyword>
<keyword id="KW-1185">Reference proteome</keyword>
<keyword id="KW-0677">Repeat</keyword>
<keyword id="KW-0812">Transmembrane</keyword>
<keyword id="KW-1133">Transmembrane helix</keyword>
<keyword id="KW-0813">Transport</keyword>
<reference key="1">
    <citation type="journal article" date="2002" name="Nature">
        <title>The genome sequence of Schizosaccharomyces pombe.</title>
        <authorList>
            <person name="Wood V."/>
            <person name="Gwilliam R."/>
            <person name="Rajandream M.A."/>
            <person name="Lyne M.H."/>
            <person name="Lyne R."/>
            <person name="Stewart A."/>
            <person name="Sgouros J.G."/>
            <person name="Peat N."/>
            <person name="Hayles J."/>
            <person name="Baker S.G."/>
            <person name="Basham D."/>
            <person name="Bowman S."/>
            <person name="Brooks K."/>
            <person name="Brown D."/>
            <person name="Brown S."/>
            <person name="Chillingworth T."/>
            <person name="Churcher C.M."/>
            <person name="Collins M."/>
            <person name="Connor R."/>
            <person name="Cronin A."/>
            <person name="Davis P."/>
            <person name="Feltwell T."/>
            <person name="Fraser A."/>
            <person name="Gentles S."/>
            <person name="Goble A."/>
            <person name="Hamlin N."/>
            <person name="Harris D.E."/>
            <person name="Hidalgo J."/>
            <person name="Hodgson G."/>
            <person name="Holroyd S."/>
            <person name="Hornsby T."/>
            <person name="Howarth S."/>
            <person name="Huckle E.J."/>
            <person name="Hunt S."/>
            <person name="Jagels K."/>
            <person name="James K.D."/>
            <person name="Jones L."/>
            <person name="Jones M."/>
            <person name="Leather S."/>
            <person name="McDonald S."/>
            <person name="McLean J."/>
            <person name="Mooney P."/>
            <person name="Moule S."/>
            <person name="Mungall K.L."/>
            <person name="Murphy L.D."/>
            <person name="Niblett D."/>
            <person name="Odell C."/>
            <person name="Oliver K."/>
            <person name="O'Neil S."/>
            <person name="Pearson D."/>
            <person name="Quail M.A."/>
            <person name="Rabbinowitsch E."/>
            <person name="Rutherford K.M."/>
            <person name="Rutter S."/>
            <person name="Saunders D."/>
            <person name="Seeger K."/>
            <person name="Sharp S."/>
            <person name="Skelton J."/>
            <person name="Simmonds M.N."/>
            <person name="Squares R."/>
            <person name="Squares S."/>
            <person name="Stevens K."/>
            <person name="Taylor K."/>
            <person name="Taylor R.G."/>
            <person name="Tivey A."/>
            <person name="Walsh S.V."/>
            <person name="Warren T."/>
            <person name="Whitehead S."/>
            <person name="Woodward J.R."/>
            <person name="Volckaert G."/>
            <person name="Aert R."/>
            <person name="Robben J."/>
            <person name="Grymonprez B."/>
            <person name="Weltjens I."/>
            <person name="Vanstreels E."/>
            <person name="Rieger M."/>
            <person name="Schaefer M."/>
            <person name="Mueller-Auer S."/>
            <person name="Gabel C."/>
            <person name="Fuchs M."/>
            <person name="Duesterhoeft A."/>
            <person name="Fritzc C."/>
            <person name="Holzer E."/>
            <person name="Moestl D."/>
            <person name="Hilbert H."/>
            <person name="Borzym K."/>
            <person name="Langer I."/>
            <person name="Beck A."/>
            <person name="Lehrach H."/>
            <person name="Reinhardt R."/>
            <person name="Pohl T.M."/>
            <person name="Eger P."/>
            <person name="Zimmermann W."/>
            <person name="Wedler H."/>
            <person name="Wambutt R."/>
            <person name="Purnelle B."/>
            <person name="Goffeau A."/>
            <person name="Cadieu E."/>
            <person name="Dreano S."/>
            <person name="Gloux S."/>
            <person name="Lelaure V."/>
            <person name="Mottier S."/>
            <person name="Galibert F."/>
            <person name="Aves S.J."/>
            <person name="Xiang Z."/>
            <person name="Hunt C."/>
            <person name="Moore K."/>
            <person name="Hurst S.M."/>
            <person name="Lucas M."/>
            <person name="Rochet M."/>
            <person name="Gaillardin C."/>
            <person name="Tallada V.A."/>
            <person name="Garzon A."/>
            <person name="Thode G."/>
            <person name="Daga R.R."/>
            <person name="Cruzado L."/>
            <person name="Jimenez J."/>
            <person name="Sanchez M."/>
            <person name="del Rey F."/>
            <person name="Benito J."/>
            <person name="Dominguez A."/>
            <person name="Revuelta J.L."/>
            <person name="Moreno S."/>
            <person name="Armstrong J."/>
            <person name="Forsburg S.L."/>
            <person name="Cerutti L."/>
            <person name="Lowe T."/>
            <person name="McCombie W.R."/>
            <person name="Paulsen I."/>
            <person name="Potashkin J."/>
            <person name="Shpakovski G.V."/>
            <person name="Ussery D."/>
            <person name="Barrell B.G."/>
            <person name="Nurse P."/>
        </authorList>
    </citation>
    <scope>NUCLEOTIDE SEQUENCE [LARGE SCALE GENOMIC DNA]</scope>
    <source>
        <strain>972 / ATCC 24843</strain>
    </source>
</reference>
<organism>
    <name type="scientific">Schizosaccharomyces pombe (strain 972 / ATCC 24843)</name>
    <name type="common">Fission yeast</name>
    <dbReference type="NCBI Taxonomy" id="284812"/>
    <lineage>
        <taxon>Eukaryota</taxon>
        <taxon>Fungi</taxon>
        <taxon>Dikarya</taxon>
        <taxon>Ascomycota</taxon>
        <taxon>Taphrinomycotina</taxon>
        <taxon>Schizosaccharomycetes</taxon>
        <taxon>Schizosaccharomycetales</taxon>
        <taxon>Schizosaccharomycetaceae</taxon>
        <taxon>Schizosaccharomyces</taxon>
    </lineage>
</organism>
<name>YAD8_SCHPO</name>
<proteinExistence type="inferred from homology"/>
<accession>Q09834</accession>
<comment type="subcellular location">
    <subcellularLocation>
        <location evidence="2">Mitochondrion inner membrane</location>
        <topology evidence="2">Multi-pass membrane protein</topology>
    </subcellularLocation>
</comment>
<comment type="similarity">
    <text evidence="2">Belongs to the mitochondrial carrier (TC 2.A.29) family.</text>
</comment>
<dbReference type="EMBL" id="CU329670">
    <property type="protein sequence ID" value="CAA91209.1"/>
    <property type="molecule type" value="Genomic_DNA"/>
</dbReference>
<dbReference type="PIR" id="T38853">
    <property type="entry name" value="S62485"/>
</dbReference>
<dbReference type="RefSeq" id="NP_593068.1">
    <property type="nucleotide sequence ID" value="NM_001018466.2"/>
</dbReference>
<dbReference type="SMR" id="Q09834"/>
<dbReference type="BioGRID" id="279913">
    <property type="interactions" value="6"/>
</dbReference>
<dbReference type="PaxDb" id="4896-SPAC4G8.08.1"/>
<dbReference type="EnsemblFungi" id="SPAC4G8.08.1">
    <property type="protein sequence ID" value="SPAC4G8.08.1:pep"/>
    <property type="gene ID" value="SPAC4G8.08"/>
</dbReference>
<dbReference type="KEGG" id="spo:2543493"/>
<dbReference type="PomBase" id="SPAC4G8.08"/>
<dbReference type="VEuPathDB" id="FungiDB:SPAC4G8.08"/>
<dbReference type="eggNOG" id="KOG0760">
    <property type="taxonomic scope" value="Eukaryota"/>
</dbReference>
<dbReference type="HOGENOM" id="CLU_015166_3_5_1"/>
<dbReference type="InParanoid" id="Q09834"/>
<dbReference type="OMA" id="VWVPIDV"/>
<dbReference type="PhylomeDB" id="Q09834"/>
<dbReference type="PRO" id="PR:Q09834"/>
<dbReference type="Proteomes" id="UP000002485">
    <property type="component" value="Chromosome I"/>
</dbReference>
<dbReference type="GO" id="GO:0005743">
    <property type="term" value="C:mitochondrial inner membrane"/>
    <property type="evidence" value="ECO:0000250"/>
    <property type="project" value="PomBase"/>
</dbReference>
<dbReference type="GO" id="GO:0005739">
    <property type="term" value="C:mitochondrion"/>
    <property type="evidence" value="ECO:0007005"/>
    <property type="project" value="PomBase"/>
</dbReference>
<dbReference type="GO" id="GO:0005381">
    <property type="term" value="F:iron ion transmembrane transporter activity"/>
    <property type="evidence" value="ECO:0000250"/>
    <property type="project" value="PomBase"/>
</dbReference>
<dbReference type="GO" id="GO:0048250">
    <property type="term" value="P:iron import into the mitochondrion"/>
    <property type="evidence" value="ECO:0000266"/>
    <property type="project" value="PomBase"/>
</dbReference>
<dbReference type="Gene3D" id="1.50.40.10">
    <property type="entry name" value="Mitochondrial carrier domain"/>
    <property type="match status" value="1"/>
</dbReference>
<dbReference type="InterPro" id="IPR018108">
    <property type="entry name" value="Mitochondrial_sb/sol_carrier"/>
</dbReference>
<dbReference type="InterPro" id="IPR023395">
    <property type="entry name" value="Mt_carrier_dom_sf"/>
</dbReference>
<dbReference type="PANTHER" id="PTHR45758:SF3">
    <property type="entry name" value="MITOCHONDRIAL SUBSTRATE CARRIER FAMILY PROTEIN E"/>
    <property type="match status" value="1"/>
</dbReference>
<dbReference type="PANTHER" id="PTHR45758">
    <property type="entry name" value="MITOFERRIN-1-RELATED"/>
    <property type="match status" value="1"/>
</dbReference>
<dbReference type="Pfam" id="PF00153">
    <property type="entry name" value="Mito_carr"/>
    <property type="match status" value="2"/>
</dbReference>
<dbReference type="SUPFAM" id="SSF103506">
    <property type="entry name" value="Mitochondrial carrier"/>
    <property type="match status" value="1"/>
</dbReference>
<dbReference type="PROSITE" id="PS50920">
    <property type="entry name" value="SOLCAR"/>
    <property type="match status" value="3"/>
</dbReference>
<sequence>MDVQTLMAASAGAVASRLLCHPIDTITVHKQTIGKFSFKTMPLKAYYRGLPISLTLITPATCLYLSTYVEAKRRFKPSVGEGAILYSICGMTAEVVSSFVWTPLEVIKARTQISQKGSVINTISTLARSEGLKGFYRGYWMGVAIYLPTTVSWWVCYEESKKYLQKQSNWDISVIAPICSALGTVVATTISTPLDIVKTRYQVATSSAMRKAEYGLQAEKELGILEIAKLLFSKHGVKGFTRGLFTRMCYIMPSGMISMSVFESFKSKDID</sequence>
<gene>
    <name type="ORF">SPAC4G8.08</name>
</gene>
<evidence type="ECO:0000255" key="1"/>
<evidence type="ECO:0000305" key="2"/>
<protein>
    <recommendedName>
        <fullName>Uncharacterized mitochondrial carrier C4G8.08</fullName>
    </recommendedName>
</protein>
<feature type="chain" id="PRO_0000090700" description="Uncharacterized mitochondrial carrier C4G8.08">
    <location>
        <begin position="1"/>
        <end position="271"/>
    </location>
</feature>
<feature type="transmembrane region" description="Helical; Name=1" evidence="1">
    <location>
        <begin position="5"/>
        <end position="26"/>
    </location>
</feature>
<feature type="transmembrane region" description="Helical; Name=2" evidence="1">
    <location>
        <begin position="49"/>
        <end position="69"/>
    </location>
</feature>
<feature type="transmembrane region" description="Helical; Name=3" evidence="1">
    <location>
        <begin position="84"/>
        <end position="104"/>
    </location>
</feature>
<feature type="transmembrane region" description="Helical; Name=4" evidence="1">
    <location>
        <begin position="138"/>
        <end position="158"/>
    </location>
</feature>
<feature type="transmembrane region" description="Helical; Name=5" evidence="1">
    <location>
        <begin position="170"/>
        <end position="190"/>
    </location>
</feature>
<feature type="transmembrane region" description="Helical; Name=6" evidence="1">
    <location>
        <begin position="240"/>
        <end position="261"/>
    </location>
</feature>
<feature type="repeat" description="Solcar 1">
    <location>
        <begin position="3"/>
        <end position="74"/>
    </location>
</feature>
<feature type="repeat" description="Solcar 2">
    <location>
        <begin position="81"/>
        <end position="163"/>
    </location>
</feature>
<feature type="repeat" description="Solcar 3">
    <location>
        <begin position="171"/>
        <end position="268"/>
    </location>
</feature>